<comment type="function">
    <text evidence="1">Component of the acetyl coenzyme A carboxylase (ACC) complex. First, biotin carboxylase catalyzes the carboxylation of biotin on its carrier protein (BCCP) and then the CO(2) group is transferred by the carboxyltransferase to acetyl-CoA to form malonyl-CoA.</text>
</comment>
<comment type="catalytic activity">
    <reaction evidence="1">
        <text>N(6)-carboxybiotinyl-L-lysyl-[protein] + acetyl-CoA = N(6)-biotinyl-L-lysyl-[protein] + malonyl-CoA</text>
        <dbReference type="Rhea" id="RHEA:54728"/>
        <dbReference type="Rhea" id="RHEA-COMP:10505"/>
        <dbReference type="Rhea" id="RHEA-COMP:10506"/>
        <dbReference type="ChEBI" id="CHEBI:57288"/>
        <dbReference type="ChEBI" id="CHEBI:57384"/>
        <dbReference type="ChEBI" id="CHEBI:83144"/>
        <dbReference type="ChEBI" id="CHEBI:83145"/>
        <dbReference type="EC" id="2.1.3.15"/>
    </reaction>
</comment>
<comment type="pathway">
    <text evidence="1">Lipid metabolism; malonyl-CoA biosynthesis; malonyl-CoA from acetyl-CoA: step 1/1.</text>
</comment>
<comment type="subunit">
    <text evidence="1">Acetyl-CoA carboxylase is a heterohexamer composed of biotin carboxyl carrier protein (AccB), biotin carboxylase (AccC) and two subunits each of ACCase subunit alpha (AccA) and ACCase subunit beta (AccD).</text>
</comment>
<comment type="subcellular location">
    <subcellularLocation>
        <location evidence="1">Cytoplasm</location>
    </subcellularLocation>
</comment>
<comment type="similarity">
    <text evidence="1">Belongs to the AccA family.</text>
</comment>
<evidence type="ECO:0000255" key="1">
    <source>
        <dbReference type="HAMAP-Rule" id="MF_00823"/>
    </source>
</evidence>
<evidence type="ECO:0000255" key="2">
    <source>
        <dbReference type="PROSITE-ProRule" id="PRU01137"/>
    </source>
</evidence>
<sequence>MTDVARILKEARDQGRMTALDYANQLFDDFMELHGDRHFADDGAVVGGIGYLDDIAVTMVGIQKGSHLQDNLFRNFGQPHPEGYRKALRLMKQAEKFGRPIITFINTAGAYPGVGAEERGQGEAIARNLFEMSDLKVPIIAIIIGEGGSGGALALAVADQVWMLENAIYAVLSPEGFASILWKDGSRATEAAELMKITAKELKRMTVIDRIIPERGYFSSEIVEMIKEHLKTEINQLRSLPLEELLENRYQRFRNF</sequence>
<keyword id="KW-0067">ATP-binding</keyword>
<keyword id="KW-0963">Cytoplasm</keyword>
<keyword id="KW-0275">Fatty acid biosynthesis</keyword>
<keyword id="KW-0276">Fatty acid metabolism</keyword>
<keyword id="KW-0444">Lipid biosynthesis</keyword>
<keyword id="KW-0443">Lipid metabolism</keyword>
<keyword id="KW-0547">Nucleotide-binding</keyword>
<keyword id="KW-1185">Reference proteome</keyword>
<keyword id="KW-0808">Transferase</keyword>
<gene>
    <name evidence="1" type="primary">accA</name>
    <name type="ordered locus">SUB1490</name>
</gene>
<reference key="1">
    <citation type="journal article" date="2009" name="BMC Genomics">
        <title>Evidence for niche adaptation in the genome of the bovine pathogen Streptococcus uberis.</title>
        <authorList>
            <person name="Ward P.N."/>
            <person name="Holden M.T.G."/>
            <person name="Leigh J.A."/>
            <person name="Lennard N."/>
            <person name="Bignell A."/>
            <person name="Barron A."/>
            <person name="Clark L."/>
            <person name="Quail M.A."/>
            <person name="Woodward J."/>
            <person name="Barrell B.G."/>
            <person name="Egan S.A."/>
            <person name="Field T.R."/>
            <person name="Maskell D."/>
            <person name="Kehoe M."/>
            <person name="Dowson C.G."/>
            <person name="Chanter N."/>
            <person name="Whatmore A.M."/>
            <person name="Bentley S.D."/>
            <person name="Parkhill J."/>
        </authorList>
    </citation>
    <scope>NUCLEOTIDE SEQUENCE [LARGE SCALE GENOMIC DNA]</scope>
    <source>
        <strain>ATCC BAA-854 / 0140J</strain>
    </source>
</reference>
<feature type="chain" id="PRO_1000148753" description="Acetyl-coenzyme A carboxylase carboxyl transferase subunit alpha">
    <location>
        <begin position="1"/>
        <end position="256"/>
    </location>
</feature>
<feature type="domain" description="CoA carboxyltransferase C-terminal" evidence="2">
    <location>
        <begin position="1"/>
        <end position="236"/>
    </location>
</feature>
<protein>
    <recommendedName>
        <fullName evidence="1">Acetyl-coenzyme A carboxylase carboxyl transferase subunit alpha</fullName>
        <shortName evidence="1">ACCase subunit alpha</shortName>
        <shortName evidence="1">Acetyl-CoA carboxylase carboxyltransferase subunit alpha</shortName>
        <ecNumber evidence="1">2.1.3.15</ecNumber>
    </recommendedName>
</protein>
<name>ACCA_STRU0</name>
<dbReference type="EC" id="2.1.3.15" evidence="1"/>
<dbReference type="EMBL" id="AM946015">
    <property type="protein sequence ID" value="CAR43197.1"/>
    <property type="molecule type" value="Genomic_DNA"/>
</dbReference>
<dbReference type="RefSeq" id="WP_015911799.1">
    <property type="nucleotide sequence ID" value="NC_012004.1"/>
</dbReference>
<dbReference type="SMR" id="B9DVD9"/>
<dbReference type="STRING" id="218495.SUB1490"/>
<dbReference type="KEGG" id="sub:SUB1490"/>
<dbReference type="eggNOG" id="COG0825">
    <property type="taxonomic scope" value="Bacteria"/>
</dbReference>
<dbReference type="HOGENOM" id="CLU_015486_0_2_9"/>
<dbReference type="OrthoDB" id="9808023at2"/>
<dbReference type="UniPathway" id="UPA00655">
    <property type="reaction ID" value="UER00711"/>
</dbReference>
<dbReference type="Proteomes" id="UP000000449">
    <property type="component" value="Chromosome"/>
</dbReference>
<dbReference type="GO" id="GO:0009317">
    <property type="term" value="C:acetyl-CoA carboxylase complex"/>
    <property type="evidence" value="ECO:0007669"/>
    <property type="project" value="InterPro"/>
</dbReference>
<dbReference type="GO" id="GO:0003989">
    <property type="term" value="F:acetyl-CoA carboxylase activity"/>
    <property type="evidence" value="ECO:0007669"/>
    <property type="project" value="InterPro"/>
</dbReference>
<dbReference type="GO" id="GO:0005524">
    <property type="term" value="F:ATP binding"/>
    <property type="evidence" value="ECO:0007669"/>
    <property type="project" value="UniProtKB-KW"/>
</dbReference>
<dbReference type="GO" id="GO:0016743">
    <property type="term" value="F:carboxyl- or carbamoyltransferase activity"/>
    <property type="evidence" value="ECO:0007669"/>
    <property type="project" value="UniProtKB-UniRule"/>
</dbReference>
<dbReference type="GO" id="GO:0006633">
    <property type="term" value="P:fatty acid biosynthetic process"/>
    <property type="evidence" value="ECO:0007669"/>
    <property type="project" value="UniProtKB-KW"/>
</dbReference>
<dbReference type="GO" id="GO:2001295">
    <property type="term" value="P:malonyl-CoA biosynthetic process"/>
    <property type="evidence" value="ECO:0007669"/>
    <property type="project" value="UniProtKB-UniRule"/>
</dbReference>
<dbReference type="Gene3D" id="3.90.226.10">
    <property type="entry name" value="2-enoyl-CoA Hydratase, Chain A, domain 1"/>
    <property type="match status" value="1"/>
</dbReference>
<dbReference type="HAMAP" id="MF_00823">
    <property type="entry name" value="AcetylCoA_CT_alpha"/>
    <property type="match status" value="1"/>
</dbReference>
<dbReference type="InterPro" id="IPR001095">
    <property type="entry name" value="Acetyl_CoA_COase_a_su"/>
</dbReference>
<dbReference type="InterPro" id="IPR029045">
    <property type="entry name" value="ClpP/crotonase-like_dom_sf"/>
</dbReference>
<dbReference type="InterPro" id="IPR011763">
    <property type="entry name" value="COA_CT_C"/>
</dbReference>
<dbReference type="NCBIfam" id="TIGR00513">
    <property type="entry name" value="accA"/>
    <property type="match status" value="1"/>
</dbReference>
<dbReference type="NCBIfam" id="NF041504">
    <property type="entry name" value="AccA_sub"/>
    <property type="match status" value="1"/>
</dbReference>
<dbReference type="NCBIfam" id="NF004344">
    <property type="entry name" value="PRK05724.1"/>
    <property type="match status" value="1"/>
</dbReference>
<dbReference type="NCBIfam" id="NF008971">
    <property type="entry name" value="PRK12319.1"/>
    <property type="match status" value="1"/>
</dbReference>
<dbReference type="PANTHER" id="PTHR42853">
    <property type="entry name" value="ACETYL-COENZYME A CARBOXYLASE CARBOXYL TRANSFERASE SUBUNIT ALPHA"/>
    <property type="match status" value="1"/>
</dbReference>
<dbReference type="PANTHER" id="PTHR42853:SF3">
    <property type="entry name" value="ACETYL-COENZYME A CARBOXYLASE CARBOXYL TRANSFERASE SUBUNIT ALPHA, CHLOROPLASTIC"/>
    <property type="match status" value="1"/>
</dbReference>
<dbReference type="Pfam" id="PF03255">
    <property type="entry name" value="ACCA"/>
    <property type="match status" value="1"/>
</dbReference>
<dbReference type="PRINTS" id="PR01069">
    <property type="entry name" value="ACCCTRFRASEA"/>
</dbReference>
<dbReference type="SUPFAM" id="SSF52096">
    <property type="entry name" value="ClpP/crotonase"/>
    <property type="match status" value="1"/>
</dbReference>
<dbReference type="PROSITE" id="PS50989">
    <property type="entry name" value="COA_CT_CTER"/>
    <property type="match status" value="1"/>
</dbReference>
<organism>
    <name type="scientific">Streptococcus uberis (strain ATCC BAA-854 / 0140J)</name>
    <dbReference type="NCBI Taxonomy" id="218495"/>
    <lineage>
        <taxon>Bacteria</taxon>
        <taxon>Bacillati</taxon>
        <taxon>Bacillota</taxon>
        <taxon>Bacilli</taxon>
        <taxon>Lactobacillales</taxon>
        <taxon>Streptococcaceae</taxon>
        <taxon>Streptococcus</taxon>
    </lineage>
</organism>
<accession>B9DVD9</accession>
<proteinExistence type="inferred from homology"/>